<reference evidence="10" key="1">
    <citation type="submission" date="2004-10" db="EMBL/GenBank/DDBJ databases">
        <authorList>
            <person name="Chew F.T."/>
            <person name="Gao Y.F."/>
            <person name="Ong S.T."/>
        </authorList>
    </citation>
    <scope>NUCLEOTIDE SEQUENCE [MRNA]</scope>
</reference>
<reference key="2">
    <citation type="journal article" date="2014" name="Am. J. Transl. Res.">
        <title>Cloning, expression, and analysis of a cDNA coding for the Dermatophagoides farinae group 21 (Der f 21) allergen.</title>
        <authorList>
            <person name="Cui Y."/>
            <person name="Jiang Y."/>
            <person name="Ji Y."/>
            <person name="Zhou Y."/>
            <person name="Yu L."/>
            <person name="Wang N."/>
            <person name="Yang L."/>
            <person name="Zhang C."/>
        </authorList>
    </citation>
    <scope>NUCLEOTIDE SEQUENCE [MRNA]</scope>
</reference>
<reference key="3">
    <citation type="journal article" date="2016" name="Am. J. Transl. Res.">
        <title>Der f 21, a novel allergen from dermatophagoides farina.</title>
        <authorList>
            <person name="Wu Y."/>
            <person name="Jiang C."/>
            <person name="Li M."/>
            <person name="Yu H."/>
            <person name="Xiao X."/>
            <person name="Fan X."/>
            <person name="Lin J."/>
            <person name="Liu X."/>
            <person name="Zhang M."/>
            <person name="Yang P."/>
            <person name="Liu Z."/>
        </authorList>
    </citation>
    <scope>TISSUE SPECIFICITY</scope>
    <scope>ALLERGEN</scope>
</reference>
<reference key="4">
    <citation type="journal article" date="2015" name="Acta Crystallogr. F Struct. Biol. Commun.">
        <title>Cloning, expression, purification, characterization, crystallization and X-ray crystallographic analysis of recombinant Der f 21 (rDer f 21) from Dermatophagoides farinae.</title>
        <authorList>
            <person name="Pang S.L."/>
            <person name="Ho K.L."/>
            <person name="Waterman J."/>
            <person name="Teh A.H."/>
            <person name="Chew F.T."/>
            <person name="Ng C.L."/>
        </authorList>
    </citation>
    <scope>CRYSTALLIZATION</scope>
    <scope>SUBUNIT</scope>
</reference>
<reference evidence="12 13" key="5">
    <citation type="journal article" date="2019" name="Sci. Rep.">
        <title>Crystal structure and epitope analysis of house dust mite allergen Der f 21.</title>
        <authorList>
            <person name="Pang S.L."/>
            <person name="Ho K.L."/>
            <person name="Waterman J."/>
            <person name="Rambo R.P."/>
            <person name="Teh A.H."/>
            <person name="Mathavan I."/>
            <person name="Harris G."/>
            <person name="Beis K."/>
            <person name="Say Y.H."/>
            <person name="Anusha M.S."/>
            <person name="Sio Y.Y."/>
            <person name="Chew F.T."/>
            <person name="Ng C.L."/>
        </authorList>
    </citation>
    <scope>X-RAY CRYSTALLOGRAPHY (1.49 ANGSTROMS) OF 25-136</scope>
    <scope>SUBUNIT</scope>
    <scope>ALLERGEN</scope>
    <scope>MUTAGENESIS OF GLU-25; ASP-26; LYS-27; HIS-34; GLU-38; GLU-39; GLU-41; GLU-42; LYS-43; ASP-45; GLU-48; HIS-49; GLU-56; LYS-59; GLU-60; GLU-62; LYS-63; LYS-65; LYS-67; GLU-68; GLU-71; ARG-75; GLU-76; GLU-81; ARG-85; LYS-89; LYS-96; ASP-99; ARG-105; GLU-109; GLU-116; LYS-120; ASP-121; GLU-124; LYS-127; LYS-128; LYS-130 AND LYS-133</scope>
</reference>
<dbReference type="EMBL" id="AY800349">
    <property type="protein sequence ID" value="AAX34048.1"/>
    <property type="molecule type" value="mRNA"/>
</dbReference>
<dbReference type="EMBL" id="KF732965">
    <property type="protein sequence ID" value="AHC94806.1"/>
    <property type="molecule type" value="mRNA"/>
</dbReference>
<dbReference type="RefSeq" id="XP_046909494.1">
    <property type="nucleotide sequence ID" value="XM_047053538.1"/>
</dbReference>
<dbReference type="PDB" id="5YNX">
    <property type="method" value="X-ray"/>
    <property type="resolution" value="1.49 A"/>
    <property type="chains" value="A/B=25-135"/>
</dbReference>
<dbReference type="PDB" id="5YNY">
    <property type="method" value="X-ray"/>
    <property type="resolution" value="2.30 A"/>
    <property type="chains" value="A/B/C/D=25-136"/>
</dbReference>
<dbReference type="PDB" id="9HAD">
    <property type="method" value="X-ray"/>
    <property type="resolution" value="2.75 A"/>
    <property type="chains" value="A/B=25-136"/>
</dbReference>
<dbReference type="PDBsum" id="5YNX"/>
<dbReference type="PDBsum" id="5YNY"/>
<dbReference type="PDBsum" id="9HAD"/>
<dbReference type="SMR" id="B2GM84"/>
<dbReference type="Allergome" id="11615">
    <property type="allergen name" value="Der f 21.0101"/>
</dbReference>
<dbReference type="Allergome" id="305">
    <property type="allergen name" value="Der f 5"/>
</dbReference>
<dbReference type="Allergome" id="5843">
    <property type="allergen name" value="Der f 21"/>
</dbReference>
<dbReference type="GeneID" id="124490949"/>
<dbReference type="OrthoDB" id="6501925at2759"/>
<dbReference type="GO" id="GO:0042803">
    <property type="term" value="F:protein homodimerization activity"/>
    <property type="evidence" value="ECO:0000314"/>
    <property type="project" value="UniProtKB"/>
</dbReference>
<dbReference type="Gene3D" id="1.20.58.970">
    <property type="match status" value="1"/>
</dbReference>
<dbReference type="InterPro" id="IPR020306">
    <property type="entry name" value="Mite_allergen_group-5/21"/>
</dbReference>
<dbReference type="InterPro" id="IPR038455">
    <property type="entry name" value="Mite_allergen_group-5/21_sf"/>
</dbReference>
<dbReference type="Pfam" id="PF11642">
    <property type="entry name" value="Blo-t-5"/>
    <property type="match status" value="1"/>
</dbReference>
<accession>B2GM84</accession>
<protein>
    <recommendedName>
        <fullName evidence="9">Mite allergen Der f 21.0101</fullName>
    </recommendedName>
    <alternativeName>
        <fullName evidence="7 11">Allergen Der f 21</fullName>
    </alternativeName>
    <alternativeName>
        <fullName evidence="5 6 8">Mite group 21 allergen Der f 21</fullName>
    </alternativeName>
    <allergenName evidence="9">Der f 21.0101</allergenName>
</protein>
<feature type="signal peptide" evidence="1">
    <location>
        <begin position="1"/>
        <end position="17"/>
    </location>
</feature>
<feature type="chain" id="PRO_5007639490" description="Mite allergen Der f 21.0101" evidence="1">
    <location>
        <begin position="18"/>
        <end position="136"/>
    </location>
</feature>
<feature type="mutagenesis site" description="Decreaced IgE-binding by some of the 24 patients tested." evidence="4">
    <original>E</original>
    <variation>A</variation>
    <location>
        <position position="25"/>
    </location>
</feature>
<feature type="mutagenesis site" description="Decreaced IgE-binding by some of the 24 patients tested." evidence="4">
    <original>D</original>
    <variation>A</variation>
    <location>
        <position position="26"/>
    </location>
</feature>
<feature type="mutagenesis site" description="Decreased IgE-binding by more than half of the 24 patients tested. Identified as a major epitope." evidence="4">
    <original>K</original>
    <variation>A</variation>
    <location>
        <position position="27"/>
    </location>
</feature>
<feature type="mutagenesis site" description="Decreaced IgE-binding by some of the 24 patients tested." evidence="4">
    <original>H</original>
    <variation>A</variation>
    <location>
        <position position="34"/>
    </location>
</feature>
<feature type="mutagenesis site" description="Decreaced IgE-binding by some of the 24 patients tested." evidence="4">
    <original>E</original>
    <variation>A</variation>
    <location>
        <position position="38"/>
    </location>
</feature>
<feature type="mutagenesis site" description="Decreaced IgE-binding by some of the 24 patients tested." evidence="4">
    <original>E</original>
    <variation>A</variation>
    <location>
        <position position="39"/>
    </location>
</feature>
<feature type="mutagenesis site" description="Decreaced IgE-binding by some of the 24 patients tested." evidence="4">
    <original>E</original>
    <variation>A</variation>
    <location>
        <position position="41"/>
    </location>
</feature>
<feature type="mutagenesis site" description="Decreaced IgE-binding by some of the 24 patients tested." evidence="4">
    <original>E</original>
    <variation>A</variation>
    <location>
        <position position="42"/>
    </location>
</feature>
<feature type="mutagenesis site" description="Decreased IgE-binding by more than half of the 24 patients tested. Identified as a major epitope." evidence="4">
    <original>K</original>
    <variation>A</variation>
    <location>
        <position position="43"/>
    </location>
</feature>
<feature type="mutagenesis site" description="Decreaced IgE-binding by some of the 24 patients tested." evidence="4">
    <original>D</original>
    <variation>A</variation>
    <location>
        <position position="45"/>
    </location>
</feature>
<feature type="mutagenesis site" description="Decreaced IgE-binding by some of the 24 patients tested." evidence="4">
    <original>E</original>
    <variation>A</variation>
    <location>
        <position position="48"/>
    </location>
</feature>
<feature type="mutagenesis site" description="Decreaced IgE-binding by some of the 24 patients tested." evidence="4">
    <original>H</original>
    <variation>A</variation>
    <location>
        <position position="49"/>
    </location>
</feature>
<feature type="mutagenesis site" description="Decreaced IgE-binding by some of the 24 patients tested." evidence="4">
    <original>E</original>
    <variation>A</variation>
    <location>
        <position position="56"/>
    </location>
</feature>
<feature type="mutagenesis site" description="Decreased IgE-binding by more than half of the 24 patients tested. Identified as a major epitope." evidence="4">
    <original>K</original>
    <variation>A</variation>
    <location>
        <position position="59"/>
    </location>
</feature>
<feature type="mutagenesis site" description="Decreased IgE-binding by more than half of the 24 patients tested. Identified as a major epitope." evidence="4">
    <original>E</original>
    <variation>A</variation>
    <location>
        <position position="60"/>
    </location>
</feature>
<feature type="mutagenesis site" description="Decreaced IgE-binding by some of the 24 patients tested." evidence="4">
    <original>E</original>
    <variation>A</variation>
    <location>
        <position position="62"/>
    </location>
</feature>
<feature type="mutagenesis site" description="Decreased IgE-binding by more than half of the 24 patients tested. Identified as a major epitope." evidence="4">
    <original>K</original>
    <variation>A</variation>
    <location>
        <position position="63"/>
    </location>
</feature>
<feature type="mutagenesis site" description="Decreased IgE-binding by more than half of the 24 patients tested. Identified as a major epitope." evidence="4">
    <original>K</original>
    <variation>A</variation>
    <location>
        <position position="65"/>
    </location>
</feature>
<feature type="mutagenesis site" description="Decreaced IgE-binding by some of the 24 patients tested." evidence="4">
    <original>K</original>
    <variation>A</variation>
    <location>
        <position position="67"/>
    </location>
</feature>
<feature type="mutagenesis site" description="Decreaced IgE-binding by some of the 24 patients tested." evidence="4">
    <original>E</original>
    <variation>A</variation>
    <location>
        <position position="68"/>
    </location>
</feature>
<feature type="mutagenesis site" description="Decreaced IgE-binding by some of the 24 patients tested." evidence="4">
    <original>E</original>
    <variation>A</variation>
    <location>
        <position position="71"/>
    </location>
</feature>
<feature type="mutagenesis site" description="Decreaced IgE-binding by some of the 24 patients tested." evidence="4">
    <original>R</original>
    <variation>A</variation>
    <location>
        <position position="75"/>
    </location>
</feature>
<feature type="mutagenesis site" description="Decreaced IgE-binding by some of the 24 patients tested." evidence="4">
    <original>E</original>
    <variation>A</variation>
    <location>
        <position position="76"/>
    </location>
</feature>
<feature type="mutagenesis site" description="Decreaced IgE-binding by some of the 24 patients tested." evidence="4">
    <original>E</original>
    <variation>A</variation>
    <location>
        <position position="81"/>
    </location>
</feature>
<feature type="mutagenesis site" description="Decreaced IgE-binding by some of the 24 patients tested." evidence="4">
    <original>R</original>
    <variation>A</variation>
    <location>
        <position position="85"/>
    </location>
</feature>
<feature type="mutagenesis site" description="Decreaced IgE-binding by some of the 24 patients tested." evidence="4">
    <original>K</original>
    <variation>A</variation>
    <location>
        <position position="89"/>
    </location>
</feature>
<feature type="mutagenesis site" description="Decreaced IgE-binding by some of the 24 patients tested." evidence="4">
    <original>K</original>
    <variation>A</variation>
    <location>
        <position position="96"/>
    </location>
</feature>
<feature type="mutagenesis site" description="Decreaced IgE-binding by some of the 24 patients tested." evidence="4">
    <original>D</original>
    <variation>A</variation>
    <location>
        <position position="99"/>
    </location>
</feature>
<feature type="mutagenesis site" description="Decreaced IgE-binding by some of the 24 patients tested." evidence="4">
    <original>R</original>
    <variation>A</variation>
    <location>
        <position position="105"/>
    </location>
</feature>
<feature type="mutagenesis site" description="Decreaced IgE-binding by some of the 24 patients tested." evidence="4">
    <original>E</original>
    <variation>A</variation>
    <location>
        <position position="109"/>
    </location>
</feature>
<feature type="mutagenesis site" description="Decreaced IgE-binding by some of the 24 patients tested." evidence="4">
    <original>E</original>
    <variation>A</variation>
    <location>
        <position position="116"/>
    </location>
</feature>
<feature type="mutagenesis site" description="Decreaced IgE-binding by some of the 24 patients tested." evidence="4">
    <original>K</original>
    <variation>A</variation>
    <location>
        <position position="120"/>
    </location>
</feature>
<feature type="mutagenesis site" description="Decreaced IgE-binding by some of the 24 patients tested." evidence="4">
    <original>D</original>
    <variation>A</variation>
    <location>
        <position position="121"/>
    </location>
</feature>
<feature type="mutagenesis site" description="Decreaced IgE-binding by some of the 24 patients tested." evidence="4">
    <original>E</original>
    <variation>A</variation>
    <location>
        <position position="124"/>
    </location>
</feature>
<feature type="mutagenesis site" description="Decreaced IgE-binding by some of the 24 patients tested." evidence="4">
    <original>K</original>
    <variation>A</variation>
    <location>
        <position position="127"/>
    </location>
</feature>
<feature type="mutagenesis site" description="Decreaced IgE-binding by some of the 24 patients tested." evidence="4">
    <original>K</original>
    <variation>A</variation>
    <location>
        <position position="128"/>
    </location>
</feature>
<feature type="mutagenesis site" description="Decreaced IgE-binding by some of the 24 patients tested." evidence="4">
    <original>K</original>
    <variation>A</variation>
    <location>
        <position position="130"/>
    </location>
</feature>
<feature type="mutagenesis site" description="Decreaced IgE-binding by some of the 24 patients tested." evidence="4">
    <original>K</original>
    <variation>A</variation>
    <location>
        <position position="133"/>
    </location>
</feature>
<feature type="strand" evidence="15">
    <location>
        <begin position="25"/>
        <end position="27"/>
    </location>
</feature>
<feature type="helix" evidence="14">
    <location>
        <begin position="31"/>
        <end position="64"/>
    </location>
</feature>
<feature type="helix" evidence="14">
    <location>
        <begin position="67"/>
        <end position="95"/>
    </location>
</feature>
<feature type="helix" evidence="14">
    <location>
        <begin position="102"/>
        <end position="130"/>
    </location>
</feature>
<keyword id="KW-0002">3D-structure</keyword>
<keyword id="KW-0020">Allergen</keyword>
<keyword id="KW-0175">Coiled coil</keyword>
<keyword id="KW-0732">Signal</keyword>
<evidence type="ECO:0000255" key="1"/>
<evidence type="ECO:0000269" key="2">
    <source>
    </source>
</evidence>
<evidence type="ECO:0000269" key="3">
    <source>
    </source>
</evidence>
<evidence type="ECO:0000269" key="4">
    <source>
    </source>
</evidence>
<evidence type="ECO:0000303" key="5">
    <source>
    </source>
</evidence>
<evidence type="ECO:0000303" key="6">
    <source>
    </source>
</evidence>
<evidence type="ECO:0000303" key="7">
    <source>
    </source>
</evidence>
<evidence type="ECO:0000303" key="8">
    <source>
    </source>
</evidence>
<evidence type="ECO:0000305" key="9"/>
<evidence type="ECO:0000312" key="10">
    <source>
        <dbReference type="EMBL" id="AAX34048.1"/>
    </source>
</evidence>
<evidence type="ECO:0000312" key="11">
    <source>
        <dbReference type="EMBL" id="AHC94806.1"/>
    </source>
</evidence>
<evidence type="ECO:0007744" key="12">
    <source>
        <dbReference type="PDB" id="5YNX"/>
    </source>
</evidence>
<evidence type="ECO:0007744" key="13">
    <source>
        <dbReference type="PDB" id="5YNY"/>
    </source>
</evidence>
<evidence type="ECO:0007829" key="14">
    <source>
        <dbReference type="PDB" id="5YNX"/>
    </source>
</evidence>
<evidence type="ECO:0007829" key="15">
    <source>
        <dbReference type="PDB" id="5YNY"/>
    </source>
</evidence>
<sequence>MKFIIFCAIVMAVSVSGFIVDVDTEDKWRNAFDHMLMEEFEEKMDQIEHGLLMLSEQYKELEKTKSKELKEQILRELTIAENYLRGALKFMQQEAKRTDLNMFERYNFETAVSTIEILVKDLAELAKKVKAVKSDD</sequence>
<comment type="subunit">
    <text evidence="2 4">Monomer. Homodimer.</text>
</comment>
<comment type="tissue specificity">
    <text evidence="3">Highly expressed in foregut (stomach), midgut and hindgut. Not expressed in body wall, reproductive system or body cavity.</text>
</comment>
<comment type="allergen">
    <text evidence="3 4">Causes an allergic reaction in human (PubMed:27069539, PubMed:30894561). Binds to IgE in 29% of the 38 dust mite allergic children tested. 43% of the 98 dust mite allergic adults tested show a positive response to this protein by skin prick test (PubMed:27069539). Binds to IgE in all of the 24 D.farinae allergic patients tested. There is a positive correlation between the number of specific major epitope residues in this allergen and the specific IgE level of the atopic population. The higher the IgE level of the patient for this protein, the higher the number of recognized epitope residues in this allergen by the IgE of the individual out of the 38 determined surface-exposed epitopes tested (PubMed:30894561). Causes an allergic reaction in mice. Mice allergic to this protein display elevated specific IgE and IgG1, increased levels of interferon gamma and interleukin-4 as well as increased proliferation of the spleen cells, airway hyperresponsiveness, large quantity of exudates in the airway lumen and profound inflammatory cell infiltration in the lung tissue (PubMed:27069539).</text>
</comment>
<comment type="similarity">
    <text evidence="9">Belongs to the mite group 5 allergen family.</text>
</comment>
<proteinExistence type="evidence at protein level"/>
<organism evidence="10">
    <name type="scientific">Dermatophagoides farinae</name>
    <name type="common">American house dust mite</name>
    <dbReference type="NCBI Taxonomy" id="6954"/>
    <lineage>
        <taxon>Eukaryota</taxon>
        <taxon>Metazoa</taxon>
        <taxon>Ecdysozoa</taxon>
        <taxon>Arthropoda</taxon>
        <taxon>Chelicerata</taxon>
        <taxon>Arachnida</taxon>
        <taxon>Acari</taxon>
        <taxon>Acariformes</taxon>
        <taxon>Sarcoptiformes</taxon>
        <taxon>Astigmata</taxon>
        <taxon>Psoroptidia</taxon>
        <taxon>Analgoidea</taxon>
        <taxon>Pyroglyphidae</taxon>
        <taxon>Dermatophagoidinae</taxon>
        <taxon>Dermatophagoides</taxon>
    </lineage>
</organism>
<name>ALL21_DERFA</name>